<keyword id="KW-0002">3D-structure</keyword>
<keyword id="KW-0963">Cytoplasm</keyword>
<keyword id="KW-0489">Methyltransferase</keyword>
<keyword id="KW-1185">Reference proteome</keyword>
<keyword id="KW-0694">RNA-binding</keyword>
<keyword id="KW-0949">S-adenosyl-L-methionine</keyword>
<keyword id="KW-0808">Transferase</keyword>
<keyword id="KW-0819">tRNA processing</keyword>
<keyword id="KW-0820">tRNA-binding</keyword>
<accession>O29011</accession>
<proteinExistence type="evidence at protein level"/>
<evidence type="ECO:0000250" key="1"/>
<evidence type="ECO:0000255" key="2">
    <source>
        <dbReference type="PROSITE-ProRule" id="PRU00529"/>
    </source>
</evidence>
<evidence type="ECO:0000305" key="3"/>
<evidence type="ECO:0007829" key="4">
    <source>
        <dbReference type="PDB" id="6ZXV"/>
    </source>
</evidence>
<evidence type="ECO:0007829" key="5">
    <source>
        <dbReference type="PDB" id="6ZXW"/>
    </source>
</evidence>
<gene>
    <name type="primary">trmG10</name>
    <name type="ordered locus">AF_1257</name>
</gene>
<protein>
    <recommendedName>
        <fullName>tRNA (guanine(10)-N2)-dimethyltransferase</fullName>
        <ecNumber>2.1.1.213</ecNumber>
    </recommendedName>
    <alternativeName>
        <fullName>tRNA:G10 dimethyltransferase</fullName>
    </alternativeName>
</protein>
<sequence>MKFLFYLSADNLEIARKEVLVLAERYGWVEDYQFEERLLLLDYAGEKFFERLAYTNEVTKIYDICSVSELEQVFSEIPVYDRLCCVRVKGGKGKTALERKLGALLWKRGAKVSVSNPEIVYKVYIQDDKCYVGLLEFERDTRQFFLRRPDRRPFLMPSAIKPKLARALVNLTGVLEGETLLDPMCGTGSFLIEAGLMGINPIGIDFIEKIVRGCRVNLEYYGIEGSVLLGDAKNLPLRDESVRGIATDYPYLRSTKAAGTLDELYSKTSEEFERVLKKGGRAAIVTNIDVESFFSNFEIEMKTEERVHGSLTRRIYLLRR</sequence>
<name>TMG10_ARCFU</name>
<comment type="function">
    <text evidence="1">Catalyzes the adenosylmethionine-dependent methylation of the exocyclic amino group (N(2)) of guanosine at position 10 of various tRNAs. Acts via a two-step process that leads to the formation of either N(2)-monomethyl (m(2)G) or N(2)-dimethylguanosine (m(2)(2)G) (By similarity).</text>
</comment>
<comment type="catalytic activity">
    <reaction>
        <text>guanosine(10) in tRNA + 2 S-adenosyl-L-methionine = N(2)-dimethylguanosine(10) in tRNA + 2 S-adenosyl-L-homocysteine + 2 H(+)</text>
        <dbReference type="Rhea" id="RHEA:43124"/>
        <dbReference type="Rhea" id="RHEA-COMP:10355"/>
        <dbReference type="Rhea" id="RHEA-COMP:10358"/>
        <dbReference type="ChEBI" id="CHEBI:15378"/>
        <dbReference type="ChEBI" id="CHEBI:57856"/>
        <dbReference type="ChEBI" id="CHEBI:59789"/>
        <dbReference type="ChEBI" id="CHEBI:74269"/>
        <dbReference type="ChEBI" id="CHEBI:74513"/>
        <dbReference type="EC" id="2.1.1.213"/>
    </reaction>
</comment>
<comment type="subunit">
    <text evidence="1">Monomer.</text>
</comment>
<comment type="subcellular location">
    <subcellularLocation>
        <location evidence="3">Cytoplasm</location>
    </subcellularLocation>
</comment>
<comment type="similarity">
    <text evidence="3">Belongs to the methyltransferase superfamily. Trm-G10 family.</text>
</comment>
<organism>
    <name type="scientific">Archaeoglobus fulgidus (strain ATCC 49558 / DSM 4304 / JCM 9628 / NBRC 100126 / VC-16)</name>
    <dbReference type="NCBI Taxonomy" id="224325"/>
    <lineage>
        <taxon>Archaea</taxon>
        <taxon>Methanobacteriati</taxon>
        <taxon>Methanobacteriota</taxon>
        <taxon>Archaeoglobi</taxon>
        <taxon>Archaeoglobales</taxon>
        <taxon>Archaeoglobaceae</taxon>
        <taxon>Archaeoglobus</taxon>
    </lineage>
</organism>
<dbReference type="EC" id="2.1.1.213"/>
<dbReference type="EMBL" id="AE000782">
    <property type="protein sequence ID" value="AAB89985.1"/>
    <property type="molecule type" value="Genomic_DNA"/>
</dbReference>
<dbReference type="PIR" id="H69406">
    <property type="entry name" value="H69406"/>
</dbReference>
<dbReference type="RefSeq" id="WP_010878752.1">
    <property type="nucleotide sequence ID" value="NC_000917.1"/>
</dbReference>
<dbReference type="PDB" id="6ZXV">
    <property type="method" value="X-ray"/>
    <property type="resolution" value="1.88 A"/>
    <property type="chains" value="A/B=1-320"/>
</dbReference>
<dbReference type="PDB" id="6ZXW">
    <property type="method" value="X-ray"/>
    <property type="resolution" value="2.19 A"/>
    <property type="chains" value="G=1-320"/>
</dbReference>
<dbReference type="PDB" id="6ZXY">
    <property type="method" value="X-ray"/>
    <property type="resolution" value="2.75 A"/>
    <property type="chains" value="B=1-320"/>
</dbReference>
<dbReference type="PDBsum" id="6ZXV"/>
<dbReference type="PDBsum" id="6ZXW"/>
<dbReference type="PDBsum" id="6ZXY"/>
<dbReference type="SMR" id="O29011"/>
<dbReference type="STRING" id="224325.AF_1257"/>
<dbReference type="PaxDb" id="224325-AF_1257"/>
<dbReference type="DNASU" id="1484481"/>
<dbReference type="EnsemblBacteria" id="AAB89985">
    <property type="protein sequence ID" value="AAB89985"/>
    <property type="gene ID" value="AF_1257"/>
</dbReference>
<dbReference type="KEGG" id="afu:AF_1257"/>
<dbReference type="eggNOG" id="arCOG00047">
    <property type="taxonomic scope" value="Archaea"/>
</dbReference>
<dbReference type="HOGENOM" id="CLU_057819_1_0_2"/>
<dbReference type="OrthoDB" id="7080at2157"/>
<dbReference type="PhylomeDB" id="O29011"/>
<dbReference type="Proteomes" id="UP000002199">
    <property type="component" value="Chromosome"/>
</dbReference>
<dbReference type="GO" id="GO:0005737">
    <property type="term" value="C:cytoplasm"/>
    <property type="evidence" value="ECO:0007669"/>
    <property type="project" value="UniProtKB-SubCell"/>
</dbReference>
<dbReference type="GO" id="GO:0160101">
    <property type="term" value="F:tRNA (guanine(10)-N2)-dimethyltransferase activity"/>
    <property type="evidence" value="ECO:0007669"/>
    <property type="project" value="UniProtKB-EC"/>
</dbReference>
<dbReference type="GO" id="GO:0160102">
    <property type="term" value="F:tRNA (guanine(10)-N2)-methyltransferase activity"/>
    <property type="evidence" value="ECO:0007669"/>
    <property type="project" value="InterPro"/>
</dbReference>
<dbReference type="GO" id="GO:0000049">
    <property type="term" value="F:tRNA binding"/>
    <property type="evidence" value="ECO:0007669"/>
    <property type="project" value="UniProtKB-KW"/>
</dbReference>
<dbReference type="GO" id="GO:0030488">
    <property type="term" value="P:tRNA methylation"/>
    <property type="evidence" value="ECO:0007669"/>
    <property type="project" value="InterPro"/>
</dbReference>
<dbReference type="CDD" id="cd02440">
    <property type="entry name" value="AdoMet_MTases"/>
    <property type="match status" value="1"/>
</dbReference>
<dbReference type="FunFam" id="3.40.50.150:FF:000251">
    <property type="entry name" value="Putative RNA methylase"/>
    <property type="match status" value="1"/>
</dbReference>
<dbReference type="Gene3D" id="3.40.50.150">
    <property type="entry name" value="Vaccinia Virus protein VP39"/>
    <property type="match status" value="1"/>
</dbReference>
<dbReference type="InterPro" id="IPR000241">
    <property type="entry name" value="RlmKL-like_Mtase"/>
</dbReference>
<dbReference type="InterPro" id="IPR053943">
    <property type="entry name" value="RlmKL-like_Mtase_CS"/>
</dbReference>
<dbReference type="InterPro" id="IPR029063">
    <property type="entry name" value="SAM-dependent_MTases_sf"/>
</dbReference>
<dbReference type="InterPro" id="IPR004114">
    <property type="entry name" value="THUMP_dom"/>
</dbReference>
<dbReference type="InterPro" id="IPR005885">
    <property type="entry name" value="TrmG10"/>
</dbReference>
<dbReference type="NCBIfam" id="TIGR01177">
    <property type="entry name" value="TIGR01177 family methyltransferase"/>
    <property type="match status" value="1"/>
</dbReference>
<dbReference type="PANTHER" id="PTHR14911:SF21">
    <property type="entry name" value="N2-METHYLGUANOSINE TRNA METHYLTRANSFERASE"/>
    <property type="match status" value="1"/>
</dbReference>
<dbReference type="PANTHER" id="PTHR14911">
    <property type="entry name" value="THUMP DOMAIN-CONTAINING"/>
    <property type="match status" value="1"/>
</dbReference>
<dbReference type="Pfam" id="PF01170">
    <property type="entry name" value="UPF0020"/>
    <property type="match status" value="1"/>
</dbReference>
<dbReference type="SUPFAM" id="SSF53335">
    <property type="entry name" value="S-adenosyl-L-methionine-dependent methyltransferases"/>
    <property type="match status" value="1"/>
</dbReference>
<dbReference type="SUPFAM" id="SSF143437">
    <property type="entry name" value="THUMP domain-like"/>
    <property type="match status" value="1"/>
</dbReference>
<dbReference type="PROSITE" id="PS51165">
    <property type="entry name" value="THUMP"/>
    <property type="match status" value="1"/>
</dbReference>
<dbReference type="PROSITE" id="PS01261">
    <property type="entry name" value="UPF0020"/>
    <property type="match status" value="1"/>
</dbReference>
<feature type="chain" id="PRO_0000140478" description="tRNA (guanine(10)-N2)-dimethyltransferase">
    <location>
        <begin position="1"/>
        <end position="320"/>
    </location>
</feature>
<feature type="domain" description="THUMP" evidence="2">
    <location>
        <begin position="46"/>
        <end position="136"/>
    </location>
</feature>
<feature type="strand" evidence="4">
    <location>
        <begin position="1"/>
        <end position="7"/>
    </location>
</feature>
<feature type="helix" evidence="4">
    <location>
        <begin position="12"/>
        <end position="26"/>
    </location>
</feature>
<feature type="strand" evidence="4">
    <location>
        <begin position="27"/>
        <end position="35"/>
    </location>
</feature>
<feature type="strand" evidence="4">
    <location>
        <begin position="38"/>
        <end position="45"/>
    </location>
</feature>
<feature type="helix" evidence="4">
    <location>
        <begin position="49"/>
        <end position="51"/>
    </location>
</feature>
<feature type="strand" evidence="4">
    <location>
        <begin position="53"/>
        <end position="65"/>
    </location>
</feature>
<feature type="helix" evidence="5">
    <location>
        <begin position="67"/>
        <end position="69"/>
    </location>
</feature>
<feature type="helix" evidence="4">
    <location>
        <begin position="70"/>
        <end position="76"/>
    </location>
</feature>
<feature type="strand" evidence="4">
    <location>
        <begin position="84"/>
        <end position="92"/>
    </location>
</feature>
<feature type="helix" evidence="4">
    <location>
        <begin position="94"/>
        <end position="107"/>
    </location>
</feature>
<feature type="strand" evidence="4">
    <location>
        <begin position="114"/>
        <end position="116"/>
    </location>
</feature>
<feature type="strand" evidence="4">
    <location>
        <begin position="118"/>
        <end position="126"/>
    </location>
</feature>
<feature type="strand" evidence="4">
    <location>
        <begin position="129"/>
        <end position="138"/>
    </location>
</feature>
<feature type="helix" evidence="4">
    <location>
        <begin position="142"/>
        <end position="146"/>
    </location>
</feature>
<feature type="helix" evidence="4">
    <location>
        <begin position="149"/>
        <end position="151"/>
    </location>
</feature>
<feature type="strand" evidence="4">
    <location>
        <begin position="152"/>
        <end position="154"/>
    </location>
</feature>
<feature type="helix" evidence="4">
    <location>
        <begin position="162"/>
        <end position="171"/>
    </location>
</feature>
<feature type="strand" evidence="4">
    <location>
        <begin position="178"/>
        <end position="182"/>
    </location>
</feature>
<feature type="helix" evidence="4">
    <location>
        <begin position="189"/>
        <end position="196"/>
    </location>
</feature>
<feature type="strand" evidence="4">
    <location>
        <begin position="200"/>
        <end position="206"/>
    </location>
</feature>
<feature type="helix" evidence="4">
    <location>
        <begin position="208"/>
        <end position="220"/>
    </location>
</feature>
<feature type="strand" evidence="4">
    <location>
        <begin position="226"/>
        <end position="229"/>
    </location>
</feature>
<feature type="strand" evidence="4">
    <location>
        <begin position="242"/>
        <end position="248"/>
    </location>
</feature>
<feature type="helix" evidence="4">
    <location>
        <begin position="255"/>
        <end position="257"/>
    </location>
</feature>
<feature type="turn" evidence="4">
    <location>
        <begin position="258"/>
        <end position="261"/>
    </location>
</feature>
<feature type="helix" evidence="4">
    <location>
        <begin position="262"/>
        <end position="275"/>
    </location>
</feature>
<feature type="strand" evidence="4">
    <location>
        <begin position="276"/>
        <end position="288"/>
    </location>
</feature>
<feature type="helix" evidence="4">
    <location>
        <begin position="291"/>
        <end position="294"/>
    </location>
</feature>
<feature type="strand" evidence="4">
    <location>
        <begin position="297"/>
        <end position="308"/>
    </location>
</feature>
<feature type="strand" evidence="4">
    <location>
        <begin position="311"/>
        <end position="319"/>
    </location>
</feature>
<reference key="1">
    <citation type="journal article" date="1997" name="Nature">
        <title>The complete genome sequence of the hyperthermophilic, sulphate-reducing archaeon Archaeoglobus fulgidus.</title>
        <authorList>
            <person name="Klenk H.-P."/>
            <person name="Clayton R.A."/>
            <person name="Tomb J.-F."/>
            <person name="White O."/>
            <person name="Nelson K.E."/>
            <person name="Ketchum K.A."/>
            <person name="Dodson R.J."/>
            <person name="Gwinn M.L."/>
            <person name="Hickey E.K."/>
            <person name="Peterson J.D."/>
            <person name="Richardson D.L."/>
            <person name="Kerlavage A.R."/>
            <person name="Graham D.E."/>
            <person name="Kyrpides N.C."/>
            <person name="Fleischmann R.D."/>
            <person name="Quackenbush J."/>
            <person name="Lee N.H."/>
            <person name="Sutton G.G."/>
            <person name="Gill S.R."/>
            <person name="Kirkness E.F."/>
            <person name="Dougherty B.A."/>
            <person name="McKenney K."/>
            <person name="Adams M.D."/>
            <person name="Loftus B.J."/>
            <person name="Peterson S.N."/>
            <person name="Reich C.I."/>
            <person name="McNeil L.K."/>
            <person name="Badger J.H."/>
            <person name="Glodek A."/>
            <person name="Zhou L."/>
            <person name="Overbeek R."/>
            <person name="Gocayne J.D."/>
            <person name="Weidman J.F."/>
            <person name="McDonald L.A."/>
            <person name="Utterback T.R."/>
            <person name="Cotton M.D."/>
            <person name="Spriggs T."/>
            <person name="Artiach P."/>
            <person name="Kaine B.P."/>
            <person name="Sykes S.M."/>
            <person name="Sadow P.W."/>
            <person name="D'Andrea K.P."/>
            <person name="Bowman C."/>
            <person name="Fujii C."/>
            <person name="Garland S.A."/>
            <person name="Mason T.M."/>
            <person name="Olsen G.J."/>
            <person name="Fraser C.M."/>
            <person name="Smith H.O."/>
            <person name="Woese C.R."/>
            <person name="Venter J.C."/>
        </authorList>
    </citation>
    <scope>NUCLEOTIDE SEQUENCE [LARGE SCALE GENOMIC DNA]</scope>
    <source>
        <strain>ATCC 49558 / DSM 4304 / JCM 9628 / NBRC 100126 / VC-16</strain>
    </source>
</reference>